<gene>
    <name evidence="1" type="primary">rimK1</name>
    <name type="ordered locus">Sputcn32_2143</name>
</gene>
<feature type="chain" id="PRO_0000340558" description="Probable alpha-L-glutamate ligase 1">
    <location>
        <begin position="1"/>
        <end position="301"/>
    </location>
</feature>
<feature type="domain" description="ATP-grasp" evidence="1">
    <location>
        <begin position="104"/>
        <end position="287"/>
    </location>
</feature>
<feature type="binding site" evidence="1">
    <location>
        <position position="141"/>
    </location>
    <ligand>
        <name>ATP</name>
        <dbReference type="ChEBI" id="CHEBI:30616"/>
    </ligand>
</feature>
<feature type="binding site" evidence="1">
    <location>
        <begin position="178"/>
        <end position="179"/>
    </location>
    <ligand>
        <name>ATP</name>
        <dbReference type="ChEBI" id="CHEBI:30616"/>
    </ligand>
</feature>
<feature type="binding site" evidence="1">
    <location>
        <position position="187"/>
    </location>
    <ligand>
        <name>ATP</name>
        <dbReference type="ChEBI" id="CHEBI:30616"/>
    </ligand>
</feature>
<feature type="binding site" evidence="1">
    <location>
        <begin position="211"/>
        <end position="213"/>
    </location>
    <ligand>
        <name>ATP</name>
        <dbReference type="ChEBI" id="CHEBI:30616"/>
    </ligand>
</feature>
<feature type="binding site" evidence="1">
    <location>
        <position position="248"/>
    </location>
    <ligand>
        <name>Mg(2+)</name>
        <dbReference type="ChEBI" id="CHEBI:18420"/>
        <label>1</label>
    </ligand>
</feature>
<feature type="binding site" evidence="1">
    <location>
        <position position="248"/>
    </location>
    <ligand>
        <name>Mn(2+)</name>
        <dbReference type="ChEBI" id="CHEBI:29035"/>
        <label>1</label>
    </ligand>
</feature>
<feature type="binding site" evidence="1">
    <location>
        <position position="260"/>
    </location>
    <ligand>
        <name>Mg(2+)</name>
        <dbReference type="ChEBI" id="CHEBI:18420"/>
        <label>1</label>
    </ligand>
</feature>
<feature type="binding site" evidence="1">
    <location>
        <position position="260"/>
    </location>
    <ligand>
        <name>Mg(2+)</name>
        <dbReference type="ChEBI" id="CHEBI:18420"/>
        <label>2</label>
    </ligand>
</feature>
<feature type="binding site" evidence="1">
    <location>
        <position position="260"/>
    </location>
    <ligand>
        <name>Mn(2+)</name>
        <dbReference type="ChEBI" id="CHEBI:29035"/>
        <label>1</label>
    </ligand>
</feature>
<feature type="binding site" evidence="1">
    <location>
        <position position="260"/>
    </location>
    <ligand>
        <name>Mn(2+)</name>
        <dbReference type="ChEBI" id="CHEBI:29035"/>
        <label>2</label>
    </ligand>
</feature>
<feature type="binding site" evidence="1">
    <location>
        <position position="262"/>
    </location>
    <ligand>
        <name>Mg(2+)</name>
        <dbReference type="ChEBI" id="CHEBI:18420"/>
        <label>2</label>
    </ligand>
</feature>
<feature type="binding site" evidence="1">
    <location>
        <position position="262"/>
    </location>
    <ligand>
        <name>Mn(2+)</name>
        <dbReference type="ChEBI" id="CHEBI:29035"/>
        <label>2</label>
    </ligand>
</feature>
<dbReference type="EC" id="6.3.2.-" evidence="1"/>
<dbReference type="EMBL" id="CP000681">
    <property type="protein sequence ID" value="ABP75864.1"/>
    <property type="molecule type" value="Genomic_DNA"/>
</dbReference>
<dbReference type="SMR" id="A4Y7D1"/>
<dbReference type="STRING" id="319224.Sputcn32_2143"/>
<dbReference type="KEGG" id="spc:Sputcn32_2143"/>
<dbReference type="eggNOG" id="COG0189">
    <property type="taxonomic scope" value="Bacteria"/>
</dbReference>
<dbReference type="HOGENOM" id="CLU_054353_0_1_6"/>
<dbReference type="GO" id="GO:0005737">
    <property type="term" value="C:cytoplasm"/>
    <property type="evidence" value="ECO:0007669"/>
    <property type="project" value="TreeGrafter"/>
</dbReference>
<dbReference type="GO" id="GO:0005524">
    <property type="term" value="F:ATP binding"/>
    <property type="evidence" value="ECO:0007669"/>
    <property type="project" value="UniProtKB-UniRule"/>
</dbReference>
<dbReference type="GO" id="GO:0046872">
    <property type="term" value="F:metal ion binding"/>
    <property type="evidence" value="ECO:0007669"/>
    <property type="project" value="UniProtKB-KW"/>
</dbReference>
<dbReference type="GO" id="GO:0018169">
    <property type="term" value="F:ribosomal S6-glutamic acid ligase activity"/>
    <property type="evidence" value="ECO:0007669"/>
    <property type="project" value="TreeGrafter"/>
</dbReference>
<dbReference type="GO" id="GO:0036211">
    <property type="term" value="P:protein modification process"/>
    <property type="evidence" value="ECO:0007669"/>
    <property type="project" value="InterPro"/>
</dbReference>
<dbReference type="GO" id="GO:0009432">
    <property type="term" value="P:SOS response"/>
    <property type="evidence" value="ECO:0007669"/>
    <property type="project" value="TreeGrafter"/>
</dbReference>
<dbReference type="GO" id="GO:0006412">
    <property type="term" value="P:translation"/>
    <property type="evidence" value="ECO:0007669"/>
    <property type="project" value="UniProtKB-KW"/>
</dbReference>
<dbReference type="FunFam" id="3.40.50.20:FF:000004">
    <property type="entry name" value="Probable alpha-L-glutamate ligase"/>
    <property type="match status" value="1"/>
</dbReference>
<dbReference type="FunFam" id="3.30.1490.20:FF:000005">
    <property type="entry name" value="Probable alpha-L-glutamate ligase 1"/>
    <property type="match status" value="1"/>
</dbReference>
<dbReference type="FunFam" id="3.30.470.20:FF:000016">
    <property type="entry name" value="Ribosomal protein S6--L-glutamate ligase"/>
    <property type="match status" value="1"/>
</dbReference>
<dbReference type="Gene3D" id="3.40.50.20">
    <property type="match status" value="1"/>
</dbReference>
<dbReference type="Gene3D" id="3.30.1490.20">
    <property type="entry name" value="ATP-grasp fold, A domain"/>
    <property type="match status" value="1"/>
</dbReference>
<dbReference type="Gene3D" id="3.30.470.20">
    <property type="entry name" value="ATP-grasp fold, B domain"/>
    <property type="match status" value="1"/>
</dbReference>
<dbReference type="HAMAP" id="MF_01552">
    <property type="entry name" value="RimK"/>
    <property type="match status" value="1"/>
</dbReference>
<dbReference type="InterPro" id="IPR011761">
    <property type="entry name" value="ATP-grasp"/>
</dbReference>
<dbReference type="InterPro" id="IPR013651">
    <property type="entry name" value="ATP-grasp_RimK-type"/>
</dbReference>
<dbReference type="InterPro" id="IPR013815">
    <property type="entry name" value="ATP_grasp_subdomain_1"/>
</dbReference>
<dbReference type="InterPro" id="IPR023533">
    <property type="entry name" value="RimK"/>
</dbReference>
<dbReference type="InterPro" id="IPR041107">
    <property type="entry name" value="Rimk_N"/>
</dbReference>
<dbReference type="InterPro" id="IPR004666">
    <property type="entry name" value="Rp_bS6_RimK/Lys_biosynth_LsyX"/>
</dbReference>
<dbReference type="NCBIfam" id="NF007764">
    <property type="entry name" value="PRK10446.1"/>
    <property type="match status" value="1"/>
</dbReference>
<dbReference type="NCBIfam" id="TIGR00768">
    <property type="entry name" value="rimK_fam"/>
    <property type="match status" value="1"/>
</dbReference>
<dbReference type="PANTHER" id="PTHR21621:SF7">
    <property type="entry name" value="RIBOSOMAL PROTEIN BS6--L-GLUTAMATE LIGASE"/>
    <property type="match status" value="1"/>
</dbReference>
<dbReference type="PANTHER" id="PTHR21621">
    <property type="entry name" value="RIBOSOMAL PROTEIN S6 MODIFICATION PROTEIN"/>
    <property type="match status" value="1"/>
</dbReference>
<dbReference type="Pfam" id="PF08443">
    <property type="entry name" value="RimK"/>
    <property type="match status" value="1"/>
</dbReference>
<dbReference type="Pfam" id="PF18030">
    <property type="entry name" value="Rimk_N"/>
    <property type="match status" value="1"/>
</dbReference>
<dbReference type="SUPFAM" id="SSF56059">
    <property type="entry name" value="Glutathione synthetase ATP-binding domain-like"/>
    <property type="match status" value="1"/>
</dbReference>
<dbReference type="PROSITE" id="PS50975">
    <property type="entry name" value="ATP_GRASP"/>
    <property type="match status" value="1"/>
</dbReference>
<proteinExistence type="inferred from homology"/>
<sequence>MRIAILSQGPELYSTKRLVEAAQLRGHEVHVINPLECYMNINMRQSSIHIGGRELPTFDAVIPRIGASITFYGSAVLRQFEMMGVYALNDSVGISRSRDKLRSMQLMSRRGIGLPITGFANKPSDIPDLIDMVGGAPLVIKLLEGTQGIGVVLAETRKAAESVIEAFMGLKANIMVQEYIKEANGADIRCFVLGDKVIAAMKRQAMPGEFRSNLHRGGTASLVKLTPEERSVAIRAAKTMGLNVAGVDLLRSNHGPVIMEVNSSPGLEGIEGATTKDVAGAIIEFVEKNVTKVKKVTQAQG</sequence>
<name>RIMK1_SHEPC</name>
<protein>
    <recommendedName>
        <fullName evidence="1">Probable alpha-L-glutamate ligase 1</fullName>
        <ecNumber evidence="1">6.3.2.-</ecNumber>
    </recommendedName>
</protein>
<comment type="cofactor">
    <cofactor evidence="1">
        <name>Mg(2+)</name>
        <dbReference type="ChEBI" id="CHEBI:18420"/>
    </cofactor>
    <cofactor evidence="1">
        <name>Mn(2+)</name>
        <dbReference type="ChEBI" id="CHEBI:29035"/>
    </cofactor>
    <text evidence="1">Binds 2 magnesium or manganese ions per subunit.</text>
</comment>
<comment type="similarity">
    <text evidence="1">Belongs to the RimK family.</text>
</comment>
<evidence type="ECO:0000255" key="1">
    <source>
        <dbReference type="HAMAP-Rule" id="MF_01552"/>
    </source>
</evidence>
<organism>
    <name type="scientific">Shewanella putrefaciens (strain CN-32 / ATCC BAA-453)</name>
    <dbReference type="NCBI Taxonomy" id="319224"/>
    <lineage>
        <taxon>Bacteria</taxon>
        <taxon>Pseudomonadati</taxon>
        <taxon>Pseudomonadota</taxon>
        <taxon>Gammaproteobacteria</taxon>
        <taxon>Alteromonadales</taxon>
        <taxon>Shewanellaceae</taxon>
        <taxon>Shewanella</taxon>
    </lineage>
</organism>
<keyword id="KW-0067">ATP-binding</keyword>
<keyword id="KW-0436">Ligase</keyword>
<keyword id="KW-0460">Magnesium</keyword>
<keyword id="KW-0464">Manganese</keyword>
<keyword id="KW-0479">Metal-binding</keyword>
<keyword id="KW-0547">Nucleotide-binding</keyword>
<keyword id="KW-0648">Protein biosynthesis</keyword>
<reference key="1">
    <citation type="submission" date="2007-04" db="EMBL/GenBank/DDBJ databases">
        <title>Complete sequence of Shewanella putrefaciens CN-32.</title>
        <authorList>
            <consortium name="US DOE Joint Genome Institute"/>
            <person name="Copeland A."/>
            <person name="Lucas S."/>
            <person name="Lapidus A."/>
            <person name="Barry K."/>
            <person name="Detter J.C."/>
            <person name="Glavina del Rio T."/>
            <person name="Hammon N."/>
            <person name="Israni S."/>
            <person name="Dalin E."/>
            <person name="Tice H."/>
            <person name="Pitluck S."/>
            <person name="Chain P."/>
            <person name="Malfatti S."/>
            <person name="Shin M."/>
            <person name="Vergez L."/>
            <person name="Schmutz J."/>
            <person name="Larimer F."/>
            <person name="Land M."/>
            <person name="Hauser L."/>
            <person name="Kyrpides N."/>
            <person name="Mikhailova N."/>
            <person name="Romine M.F."/>
            <person name="Fredrickson J."/>
            <person name="Tiedje J."/>
            <person name="Richardson P."/>
        </authorList>
    </citation>
    <scope>NUCLEOTIDE SEQUENCE [LARGE SCALE GENOMIC DNA]</scope>
    <source>
        <strain>CN-32 / ATCC BAA-453</strain>
    </source>
</reference>
<accession>A4Y7D1</accession>